<accession>Q0AB61</accession>
<organism>
    <name type="scientific">Alkalilimnicola ehrlichii (strain ATCC BAA-1101 / DSM 17681 / MLHE-1)</name>
    <dbReference type="NCBI Taxonomy" id="187272"/>
    <lineage>
        <taxon>Bacteria</taxon>
        <taxon>Pseudomonadati</taxon>
        <taxon>Pseudomonadota</taxon>
        <taxon>Gammaproteobacteria</taxon>
        <taxon>Chromatiales</taxon>
        <taxon>Ectothiorhodospiraceae</taxon>
        <taxon>Alkalilimnicola</taxon>
    </lineage>
</organism>
<name>MIAA_ALKEH</name>
<feature type="chain" id="PRO_0000377057" description="tRNA dimethylallyltransferase">
    <location>
        <begin position="1"/>
        <end position="317"/>
    </location>
</feature>
<feature type="region of interest" description="Interaction with substrate tRNA" evidence="1">
    <location>
        <begin position="43"/>
        <end position="46"/>
    </location>
</feature>
<feature type="region of interest" description="Interaction with substrate tRNA" evidence="1">
    <location>
        <begin position="167"/>
        <end position="171"/>
    </location>
</feature>
<feature type="region of interest" description="Interaction with substrate tRNA" evidence="1">
    <location>
        <begin position="281"/>
        <end position="288"/>
    </location>
</feature>
<feature type="binding site" evidence="1">
    <location>
        <begin position="18"/>
        <end position="25"/>
    </location>
    <ligand>
        <name>ATP</name>
        <dbReference type="ChEBI" id="CHEBI:30616"/>
    </ligand>
</feature>
<feature type="binding site" evidence="1">
    <location>
        <begin position="20"/>
        <end position="25"/>
    </location>
    <ligand>
        <name>substrate</name>
    </ligand>
</feature>
<feature type="site" description="Interaction with substrate tRNA" evidence="1">
    <location>
        <position position="109"/>
    </location>
</feature>
<feature type="site" description="Interaction with substrate tRNA" evidence="1">
    <location>
        <position position="131"/>
    </location>
</feature>
<gene>
    <name evidence="1" type="primary">miaA</name>
    <name type="ordered locus">Mlg_0572</name>
</gene>
<proteinExistence type="inferred from homology"/>
<evidence type="ECO:0000255" key="1">
    <source>
        <dbReference type="HAMAP-Rule" id="MF_00185"/>
    </source>
</evidence>
<dbReference type="EC" id="2.5.1.75" evidence="1"/>
<dbReference type="EMBL" id="CP000453">
    <property type="protein sequence ID" value="ABI55926.1"/>
    <property type="molecule type" value="Genomic_DNA"/>
</dbReference>
<dbReference type="SMR" id="Q0AB61"/>
<dbReference type="KEGG" id="aeh:Mlg_0572"/>
<dbReference type="eggNOG" id="COG0324">
    <property type="taxonomic scope" value="Bacteria"/>
</dbReference>
<dbReference type="HOGENOM" id="CLU_032616_0_0_6"/>
<dbReference type="OrthoDB" id="9776390at2"/>
<dbReference type="Proteomes" id="UP000001962">
    <property type="component" value="Chromosome"/>
</dbReference>
<dbReference type="GO" id="GO:0005524">
    <property type="term" value="F:ATP binding"/>
    <property type="evidence" value="ECO:0007669"/>
    <property type="project" value="UniProtKB-UniRule"/>
</dbReference>
<dbReference type="GO" id="GO:0052381">
    <property type="term" value="F:tRNA dimethylallyltransferase activity"/>
    <property type="evidence" value="ECO:0007669"/>
    <property type="project" value="UniProtKB-UniRule"/>
</dbReference>
<dbReference type="GO" id="GO:0006400">
    <property type="term" value="P:tRNA modification"/>
    <property type="evidence" value="ECO:0007669"/>
    <property type="project" value="TreeGrafter"/>
</dbReference>
<dbReference type="FunFam" id="1.10.20.140:FF:000001">
    <property type="entry name" value="tRNA dimethylallyltransferase"/>
    <property type="match status" value="1"/>
</dbReference>
<dbReference type="Gene3D" id="1.10.20.140">
    <property type="match status" value="1"/>
</dbReference>
<dbReference type="Gene3D" id="3.40.50.300">
    <property type="entry name" value="P-loop containing nucleotide triphosphate hydrolases"/>
    <property type="match status" value="1"/>
</dbReference>
<dbReference type="HAMAP" id="MF_00185">
    <property type="entry name" value="IPP_trans"/>
    <property type="match status" value="1"/>
</dbReference>
<dbReference type="InterPro" id="IPR039657">
    <property type="entry name" value="Dimethylallyltransferase"/>
</dbReference>
<dbReference type="InterPro" id="IPR018022">
    <property type="entry name" value="IPT"/>
</dbReference>
<dbReference type="InterPro" id="IPR027417">
    <property type="entry name" value="P-loop_NTPase"/>
</dbReference>
<dbReference type="NCBIfam" id="TIGR00174">
    <property type="entry name" value="miaA"/>
    <property type="match status" value="1"/>
</dbReference>
<dbReference type="PANTHER" id="PTHR11088">
    <property type="entry name" value="TRNA DIMETHYLALLYLTRANSFERASE"/>
    <property type="match status" value="1"/>
</dbReference>
<dbReference type="PANTHER" id="PTHR11088:SF60">
    <property type="entry name" value="TRNA DIMETHYLALLYLTRANSFERASE"/>
    <property type="match status" value="1"/>
</dbReference>
<dbReference type="Pfam" id="PF01715">
    <property type="entry name" value="IPPT"/>
    <property type="match status" value="1"/>
</dbReference>
<dbReference type="SUPFAM" id="SSF52540">
    <property type="entry name" value="P-loop containing nucleoside triphosphate hydrolases"/>
    <property type="match status" value="2"/>
</dbReference>
<reference key="1">
    <citation type="submission" date="2006-08" db="EMBL/GenBank/DDBJ databases">
        <title>Complete sequence of Alkalilimnicola ehrilichei MLHE-1.</title>
        <authorList>
            <person name="Copeland A."/>
            <person name="Lucas S."/>
            <person name="Lapidus A."/>
            <person name="Barry K."/>
            <person name="Detter J.C."/>
            <person name="Glavina del Rio T."/>
            <person name="Hammon N."/>
            <person name="Israni S."/>
            <person name="Dalin E."/>
            <person name="Tice H."/>
            <person name="Pitluck S."/>
            <person name="Sims D."/>
            <person name="Brettin T."/>
            <person name="Bruce D."/>
            <person name="Han C."/>
            <person name="Tapia R."/>
            <person name="Gilna P."/>
            <person name="Schmutz J."/>
            <person name="Larimer F."/>
            <person name="Land M."/>
            <person name="Hauser L."/>
            <person name="Kyrpides N."/>
            <person name="Mikhailova N."/>
            <person name="Oremland R.S."/>
            <person name="Hoeft S.E."/>
            <person name="Switzer-Blum J."/>
            <person name="Kulp T."/>
            <person name="King G."/>
            <person name="Tabita R."/>
            <person name="Witte B."/>
            <person name="Santini J.M."/>
            <person name="Basu P."/>
            <person name="Hollibaugh J.T."/>
            <person name="Xie G."/>
            <person name="Stolz J.F."/>
            <person name="Richardson P."/>
        </authorList>
    </citation>
    <scope>NUCLEOTIDE SEQUENCE [LARGE SCALE GENOMIC DNA]</scope>
    <source>
        <strain>ATCC BAA-1101 / DSM 17681 / MLHE-1</strain>
    </source>
</reference>
<sequence>MSHAVRQPGTPPVLFLMGPTATGKTDCAVALARRLPVEIISVDSALVYRGMDIGTAKPSAALLAEVPHRLIDILDPSEAYSAARFRADALAAIHEIHAAGRVPLLAGGTMLYFRALEHGLSELPEADPALRRRLEGEAAAHGWGALHDRLAAVDPEAAARIHPHDAQRIQRALEVWELTGQSLSELQRAGRQRLPWPIGKWVLMPESRGELHRRIARRFDQMLAQGFIDEVAALRQRPDLHRALPAMRSVGYRQVWDYLDGCYDRETLRERGIAATRQFAKRQITWLRRERGVTAWLTPEQARDGLPERVGRFLSGG</sequence>
<keyword id="KW-0067">ATP-binding</keyword>
<keyword id="KW-0460">Magnesium</keyword>
<keyword id="KW-0547">Nucleotide-binding</keyword>
<keyword id="KW-1185">Reference proteome</keyword>
<keyword id="KW-0808">Transferase</keyword>
<keyword id="KW-0819">tRNA processing</keyword>
<protein>
    <recommendedName>
        <fullName evidence="1">tRNA dimethylallyltransferase</fullName>
        <ecNumber evidence="1">2.5.1.75</ecNumber>
    </recommendedName>
    <alternativeName>
        <fullName evidence="1">Dimethylallyl diphosphate:tRNA dimethylallyltransferase</fullName>
        <shortName evidence="1">DMAPP:tRNA dimethylallyltransferase</shortName>
        <shortName evidence="1">DMATase</shortName>
    </alternativeName>
    <alternativeName>
        <fullName evidence="1">Isopentenyl-diphosphate:tRNA isopentenyltransferase</fullName>
        <shortName evidence="1">IPP transferase</shortName>
        <shortName evidence="1">IPPT</shortName>
        <shortName evidence="1">IPTase</shortName>
    </alternativeName>
</protein>
<comment type="function">
    <text evidence="1">Catalyzes the transfer of a dimethylallyl group onto the adenine at position 37 in tRNAs that read codons beginning with uridine, leading to the formation of N6-(dimethylallyl)adenosine (i(6)A).</text>
</comment>
<comment type="catalytic activity">
    <reaction evidence="1">
        <text>adenosine(37) in tRNA + dimethylallyl diphosphate = N(6)-dimethylallyladenosine(37) in tRNA + diphosphate</text>
        <dbReference type="Rhea" id="RHEA:26482"/>
        <dbReference type="Rhea" id="RHEA-COMP:10162"/>
        <dbReference type="Rhea" id="RHEA-COMP:10375"/>
        <dbReference type="ChEBI" id="CHEBI:33019"/>
        <dbReference type="ChEBI" id="CHEBI:57623"/>
        <dbReference type="ChEBI" id="CHEBI:74411"/>
        <dbReference type="ChEBI" id="CHEBI:74415"/>
        <dbReference type="EC" id="2.5.1.75"/>
    </reaction>
</comment>
<comment type="cofactor">
    <cofactor evidence="1">
        <name>Mg(2+)</name>
        <dbReference type="ChEBI" id="CHEBI:18420"/>
    </cofactor>
</comment>
<comment type="subunit">
    <text evidence="1">Monomer.</text>
</comment>
<comment type="similarity">
    <text evidence="1">Belongs to the IPP transferase family.</text>
</comment>